<evidence type="ECO:0000250" key="1"/>
<evidence type="ECO:0000269" key="2">
    <source>
    </source>
</evidence>
<evidence type="ECO:0000269" key="3">
    <source ref="4"/>
</evidence>
<evidence type="ECO:0000305" key="4"/>
<evidence type="ECO:0000305" key="5">
    <source>
    </source>
</evidence>
<proteinExistence type="evidence at protein level"/>
<keyword id="KW-0963">Cytoplasm</keyword>
<keyword id="KW-0903">Direct protein sequencing</keyword>
<keyword id="KW-0276">Fatty acid metabolism</keyword>
<keyword id="KW-0378">Hydrolase</keyword>
<keyword id="KW-0443">Lipid metabolism</keyword>
<keyword id="KW-1267">Proteomics identification</keyword>
<keyword id="KW-1185">Reference proteome</keyword>
<keyword id="KW-0719">Serine esterase</keyword>
<organism>
    <name type="scientific">Homo sapiens</name>
    <name type="common">Human</name>
    <dbReference type="NCBI Taxonomy" id="9606"/>
    <lineage>
        <taxon>Eukaryota</taxon>
        <taxon>Metazoa</taxon>
        <taxon>Chordata</taxon>
        <taxon>Craniata</taxon>
        <taxon>Vertebrata</taxon>
        <taxon>Euteleostomi</taxon>
        <taxon>Mammalia</taxon>
        <taxon>Eutheria</taxon>
        <taxon>Euarchontoglires</taxon>
        <taxon>Primates</taxon>
        <taxon>Haplorrhini</taxon>
        <taxon>Catarrhini</taxon>
        <taxon>Hominidae</taxon>
        <taxon>Homo</taxon>
    </lineage>
</organism>
<reference key="1">
    <citation type="journal article" date="2006" name="FASEB J.">
        <title>Analysis of the mouse and human acyl-CoA thioesterase (ACOT) gene clusters shows that convergent, functional evolution results in a reduced number of human peroxisomal ACOTs.</title>
        <authorList>
            <person name="Hunt M.C."/>
            <person name="Rautanen A."/>
            <person name="Westin M.A.K."/>
            <person name="Svensson L.T."/>
            <person name="Alexson S.E.H."/>
        </authorList>
    </citation>
    <scope>NUCLEOTIDE SEQUENCE [MRNA]</scope>
    <scope>FUNCTION</scope>
    <scope>CATALYTIC ACTIVITY</scope>
    <scope>SUBSTRATE SPECIFICITY</scope>
    <scope>BIOPHYSICOCHEMICAL PROPERTIES</scope>
    <scope>PATHWAY</scope>
    <scope>SUBCELLULAR LOCATION</scope>
</reference>
<reference key="2">
    <citation type="submission" date="2003-01" db="EMBL/GenBank/DDBJ databases">
        <title>Full-length cDNA libraries and normalization.</title>
        <authorList>
            <person name="Li W.B."/>
            <person name="Gruber C."/>
            <person name="Jessee J."/>
            <person name="Polayes D."/>
        </authorList>
    </citation>
    <scope>NUCLEOTIDE SEQUENCE [LARGE SCALE MRNA]</scope>
    <source>
        <tissue>Neuroblastoma</tissue>
    </source>
</reference>
<reference key="3">
    <citation type="journal article" date="2004" name="Genome Res.">
        <title>The status, quality, and expansion of the NIH full-length cDNA project: the Mammalian Gene Collection (MGC).</title>
        <authorList>
            <consortium name="The MGC Project Team"/>
        </authorList>
    </citation>
    <scope>NUCLEOTIDE SEQUENCE [LARGE SCALE MRNA]</scope>
</reference>
<reference key="4">
    <citation type="submission" date="2010-01" db="UniProtKB">
        <authorList>
            <person name="Bienvenut W.V."/>
        </authorList>
    </citation>
    <scope>PROTEIN SEQUENCE OF 2-12; 25-35 AND 223-233</scope>
    <scope>CLEAVAGE OF INITIATOR METHIONINE</scope>
    <scope>IDENTIFICATION BY MASS SPECTROMETRY</scope>
    <source>
        <tissue>Ovarian carcinoma</tissue>
    </source>
</reference>
<accession>Q86TX2</accession>
<accession>A1L173</accession>
<accession>Q3I5F9</accession>
<dbReference type="EC" id="3.1.2.-" evidence="2"/>
<dbReference type="EC" id="3.1.2.2" evidence="2"/>
<dbReference type="EMBL" id="DQ082754">
    <property type="protein sequence ID" value="AAZ31236.1"/>
    <property type="molecule type" value="mRNA"/>
</dbReference>
<dbReference type="EMBL" id="BX161396">
    <property type="protein sequence ID" value="CAD61883.1"/>
    <property type="molecule type" value="mRNA"/>
</dbReference>
<dbReference type="EMBL" id="BC127748">
    <property type="protein sequence ID" value="AAI27749.1"/>
    <property type="molecule type" value="mRNA"/>
</dbReference>
<dbReference type="EMBL" id="BC132889">
    <property type="protein sequence ID" value="AAI32890.1"/>
    <property type="molecule type" value="mRNA"/>
</dbReference>
<dbReference type="EMBL" id="BC132891">
    <property type="protein sequence ID" value="AAI32892.1"/>
    <property type="molecule type" value="mRNA"/>
</dbReference>
<dbReference type="EMBL" id="BC143042">
    <property type="protein sequence ID" value="AAI43043.1"/>
    <property type="molecule type" value="mRNA"/>
</dbReference>
<dbReference type="CCDS" id="CCDS32117.1"/>
<dbReference type="RefSeq" id="NP_001032238.1">
    <property type="nucleotide sequence ID" value="NM_001037161.2"/>
</dbReference>
<dbReference type="SMR" id="Q86TX2"/>
<dbReference type="BioGRID" id="534965">
    <property type="interactions" value="133"/>
</dbReference>
<dbReference type="FunCoup" id="Q86TX2">
    <property type="interactions" value="393"/>
</dbReference>
<dbReference type="IntAct" id="Q86TX2">
    <property type="interactions" value="30"/>
</dbReference>
<dbReference type="MINT" id="Q86TX2"/>
<dbReference type="STRING" id="9606.ENSP00000311224"/>
<dbReference type="ChEMBL" id="CHEMBL2189136"/>
<dbReference type="SwissLipids" id="SLP:000000613"/>
<dbReference type="ESTHER" id="human-ACOT1">
    <property type="family name" value="Acyl-CoA_Thioesterase"/>
</dbReference>
<dbReference type="GlyGen" id="Q86TX2">
    <property type="glycosylation" value="1 site, 1 O-linked glycan (1 site)"/>
</dbReference>
<dbReference type="iPTMnet" id="Q86TX2"/>
<dbReference type="PhosphoSitePlus" id="Q86TX2"/>
<dbReference type="SwissPalm" id="Q86TX2"/>
<dbReference type="BioMuta" id="ACOT1"/>
<dbReference type="DMDM" id="50428913"/>
<dbReference type="jPOST" id="Q86TX2"/>
<dbReference type="MassIVE" id="Q86TX2"/>
<dbReference type="PaxDb" id="9606-ENSP00000311224"/>
<dbReference type="PeptideAtlas" id="Q86TX2"/>
<dbReference type="ProteomicsDB" id="69743"/>
<dbReference type="Pumba" id="Q86TX2"/>
<dbReference type="Antibodypedia" id="54875">
    <property type="antibodies" value="100 antibodies from 21 providers"/>
</dbReference>
<dbReference type="DNASU" id="641371"/>
<dbReference type="Ensembl" id="ENST00000311148.9">
    <property type="protein sequence ID" value="ENSP00000311224.4"/>
    <property type="gene ID" value="ENSG00000184227.8"/>
</dbReference>
<dbReference type="GeneID" id="641371"/>
<dbReference type="KEGG" id="hsa:641371"/>
<dbReference type="MANE-Select" id="ENST00000311148.9">
    <property type="protein sequence ID" value="ENSP00000311224.4"/>
    <property type="RefSeq nucleotide sequence ID" value="NM_001037161.2"/>
    <property type="RefSeq protein sequence ID" value="NP_001032238.1"/>
</dbReference>
<dbReference type="UCSC" id="uc001xol.2">
    <property type="organism name" value="human"/>
</dbReference>
<dbReference type="AGR" id="HGNC:33128"/>
<dbReference type="CTD" id="641371"/>
<dbReference type="DisGeNET" id="641371"/>
<dbReference type="GeneCards" id="ACOT1"/>
<dbReference type="HGNC" id="HGNC:33128">
    <property type="gene designation" value="ACOT1"/>
</dbReference>
<dbReference type="HPA" id="ENSG00000184227">
    <property type="expression patterns" value="Tissue enhanced (liver)"/>
</dbReference>
<dbReference type="MIM" id="614313">
    <property type="type" value="gene"/>
</dbReference>
<dbReference type="neXtProt" id="NX_Q86TX2"/>
<dbReference type="OpenTargets" id="ENSG00000184227"/>
<dbReference type="PharmGKB" id="PA162375318"/>
<dbReference type="VEuPathDB" id="HostDB:ENSG00000184227"/>
<dbReference type="eggNOG" id="ENOG502QQ8Z">
    <property type="taxonomic scope" value="Eukaryota"/>
</dbReference>
<dbReference type="GeneTree" id="ENSGT01010000222336"/>
<dbReference type="HOGENOM" id="CLU_029849_4_0_1"/>
<dbReference type="InParanoid" id="Q86TX2"/>
<dbReference type="OMA" id="LDVPYMP"/>
<dbReference type="OrthoDB" id="6347013at2759"/>
<dbReference type="PAN-GO" id="Q86TX2">
    <property type="GO annotations" value="3 GO annotations based on evolutionary models"/>
</dbReference>
<dbReference type="PhylomeDB" id="Q86TX2"/>
<dbReference type="TreeFam" id="TF314911"/>
<dbReference type="BioCyc" id="MetaCyc:MONOMER-14105"/>
<dbReference type="BRENDA" id="3.1.2.2">
    <property type="organism ID" value="2681"/>
</dbReference>
<dbReference type="PathwayCommons" id="Q86TX2"/>
<dbReference type="Reactome" id="R-HSA-77289">
    <property type="pathway name" value="Mitochondrial Fatty Acid Beta-Oxidation"/>
</dbReference>
<dbReference type="SABIO-RK" id="Q86TX2"/>
<dbReference type="SignaLink" id="Q86TX2"/>
<dbReference type="UniPathway" id="UPA00199"/>
<dbReference type="BioGRID-ORCS" id="641371">
    <property type="hits" value="10 hits in 1054 CRISPR screens"/>
</dbReference>
<dbReference type="ChiTaRS" id="ACOT1">
    <property type="organism name" value="human"/>
</dbReference>
<dbReference type="GenomeRNAi" id="641371"/>
<dbReference type="Pharos" id="Q86TX2">
    <property type="development level" value="Tbio"/>
</dbReference>
<dbReference type="PRO" id="PR:Q86TX2"/>
<dbReference type="Proteomes" id="UP000005640">
    <property type="component" value="Chromosome 14"/>
</dbReference>
<dbReference type="RNAct" id="Q86TX2">
    <property type="molecule type" value="protein"/>
</dbReference>
<dbReference type="Bgee" id="ENSG00000184227">
    <property type="expression patterns" value="Expressed in primordial germ cell in gonad and 103 other cell types or tissues"/>
</dbReference>
<dbReference type="ExpressionAtlas" id="Q86TX2">
    <property type="expression patterns" value="baseline and differential"/>
</dbReference>
<dbReference type="GO" id="GO:0005829">
    <property type="term" value="C:cytosol"/>
    <property type="evidence" value="ECO:0000314"/>
    <property type="project" value="HGNC-UCL"/>
</dbReference>
<dbReference type="GO" id="GO:0005739">
    <property type="term" value="C:mitochondrion"/>
    <property type="evidence" value="ECO:0006056"/>
    <property type="project" value="FlyBase"/>
</dbReference>
<dbReference type="GO" id="GO:0052689">
    <property type="term" value="F:carboxylic ester hydrolase activity"/>
    <property type="evidence" value="ECO:0007669"/>
    <property type="project" value="UniProtKB-KW"/>
</dbReference>
<dbReference type="GO" id="GO:0047617">
    <property type="term" value="F:fatty acyl-CoA hydrolase activity"/>
    <property type="evidence" value="ECO:0000314"/>
    <property type="project" value="HGNC-UCL"/>
</dbReference>
<dbReference type="GO" id="GO:0006637">
    <property type="term" value="P:acyl-CoA metabolic process"/>
    <property type="evidence" value="ECO:0000314"/>
    <property type="project" value="HGNC-UCL"/>
</dbReference>
<dbReference type="GO" id="GO:0006631">
    <property type="term" value="P:fatty acid metabolic process"/>
    <property type="evidence" value="ECO:0000318"/>
    <property type="project" value="GO_Central"/>
</dbReference>
<dbReference type="GO" id="GO:0001676">
    <property type="term" value="P:long-chain fatty acid metabolic process"/>
    <property type="evidence" value="ECO:0000314"/>
    <property type="project" value="HGNC-UCL"/>
</dbReference>
<dbReference type="GO" id="GO:0000038">
    <property type="term" value="P:very long-chain fatty acid metabolic process"/>
    <property type="evidence" value="ECO:0000314"/>
    <property type="project" value="HGNC-UCL"/>
</dbReference>
<dbReference type="FunFam" id="2.60.40.2240:FF:000001">
    <property type="entry name" value="acyl-coenzyme A thioesterase 4"/>
    <property type="match status" value="1"/>
</dbReference>
<dbReference type="FunFam" id="3.40.50.1820:FF:000024">
    <property type="entry name" value="acyl-coenzyme A thioesterase 4"/>
    <property type="match status" value="1"/>
</dbReference>
<dbReference type="Gene3D" id="2.60.40.2240">
    <property type="entry name" value="Acyl-CoA thioester hydrolase/BAAT N-terminal domain"/>
    <property type="match status" value="1"/>
</dbReference>
<dbReference type="Gene3D" id="3.40.50.1820">
    <property type="entry name" value="alpha/beta hydrolase"/>
    <property type="match status" value="1"/>
</dbReference>
<dbReference type="InterPro" id="IPR029058">
    <property type="entry name" value="AB_hydrolase_fold"/>
</dbReference>
<dbReference type="InterPro" id="IPR016662">
    <property type="entry name" value="Acyl-CoA_thioEstase_long-chain"/>
</dbReference>
<dbReference type="InterPro" id="IPR014940">
    <property type="entry name" value="BAAT_C"/>
</dbReference>
<dbReference type="InterPro" id="IPR006862">
    <property type="entry name" value="Thio_Ohase/aa_AcTrfase"/>
</dbReference>
<dbReference type="InterPro" id="IPR042490">
    <property type="entry name" value="Thio_Ohase/BAAT_N"/>
</dbReference>
<dbReference type="PANTHER" id="PTHR10824:SF16">
    <property type="entry name" value="ACYL-COENZYME A THIOESTERASE 1-RELATED"/>
    <property type="match status" value="1"/>
</dbReference>
<dbReference type="PANTHER" id="PTHR10824">
    <property type="entry name" value="ACYL-COENZYME A THIOESTERASE-RELATED"/>
    <property type="match status" value="1"/>
</dbReference>
<dbReference type="Pfam" id="PF08840">
    <property type="entry name" value="BAAT_C"/>
    <property type="match status" value="1"/>
</dbReference>
<dbReference type="Pfam" id="PF04775">
    <property type="entry name" value="Bile_Hydr_Trans"/>
    <property type="match status" value="1"/>
</dbReference>
<dbReference type="PIRSF" id="PIRSF016521">
    <property type="entry name" value="Acyl-CoA_hydro"/>
    <property type="match status" value="1"/>
</dbReference>
<dbReference type="SUPFAM" id="SSF53474">
    <property type="entry name" value="alpha/beta-Hydrolases"/>
    <property type="match status" value="1"/>
</dbReference>
<sequence length="421" mass="46277">MAATLILEPAGRCCWDEPVRIAVRGLAPEQPVTLRASLRDEKGALFQAHARYRADTLGELDLERAPALGGSFAGLEPMGLLWALEPEKPLVRLVKRDVRTPLAVELEVLDGHDPDPGRLLCRVRHERYFLPPGVRREPVRAGRVRGTLFLPPEPGPFPGIVDMFGTGGGLLEYRASLLAGKGFAVMALAYYNYEDLPKTMETLHLEYFEEAVNYLLSHPEVKGPGVGLLGISKGGELCLSMASFLKGITAAVVINGSVANVGGTLRYKGETLPPVGVNRNRIKVTKDGYADIVDVLNSPLEGPDQKSFIPVERAESTFLFLVGQDDHNWKSEFYANEACKRLQAHGRRKPQIICYPETGHYIEPPYFPLCRASLHALVGSPIIWGGEPRAHAMAQVDAWKQLQTFFHKHLGGHEGTIPSKV</sequence>
<gene>
    <name type="primary">ACOT1</name>
    <name type="synonym">CTE1</name>
</gene>
<feature type="initiator methionine" description="Removed" evidence="3">
    <location>
        <position position="1"/>
    </location>
</feature>
<feature type="chain" id="PRO_0000202155" description="Acyl-coenzyme A thioesterase 1">
    <location>
        <begin position="2"/>
        <end position="421"/>
    </location>
</feature>
<feature type="active site" description="Charge relay system" evidence="1">
    <location>
        <position position="232"/>
    </location>
</feature>
<feature type="active site" description="Charge relay system" evidence="1">
    <location>
        <position position="326"/>
    </location>
</feature>
<feature type="active site" description="Charge relay system" evidence="1">
    <location>
        <position position="360"/>
    </location>
</feature>
<feature type="sequence variant" id="VAR_059830" description="In dbSNP:rs1049568.">
    <original>R</original>
    <variation>H</variation>
    <location>
        <position position="266"/>
    </location>
</feature>
<comment type="function">
    <text evidence="2">Catalyzes the hydrolysis of acyl-CoAs into free fatty acids and coenzyme A (CoASH), regulating their respective intracellular levels. More active towards saturated and unsaturated long chain fatty acyl-CoAs (C12-C20).</text>
</comment>
<comment type="catalytic activity">
    <reaction evidence="2">
        <text>hexadecanoyl-CoA + H2O = hexadecanoate + CoA + H(+)</text>
        <dbReference type="Rhea" id="RHEA:16645"/>
        <dbReference type="ChEBI" id="CHEBI:7896"/>
        <dbReference type="ChEBI" id="CHEBI:15377"/>
        <dbReference type="ChEBI" id="CHEBI:15378"/>
        <dbReference type="ChEBI" id="CHEBI:57287"/>
        <dbReference type="ChEBI" id="CHEBI:57379"/>
        <dbReference type="EC" id="3.1.2.2"/>
    </reaction>
    <physiologicalReaction direction="left-to-right" evidence="5">
        <dbReference type="Rhea" id="RHEA:16646"/>
    </physiologicalReaction>
</comment>
<comment type="catalytic activity">
    <reaction evidence="2">
        <text>decanoyl-CoA + H2O = decanoate + CoA + H(+)</text>
        <dbReference type="Rhea" id="RHEA:40059"/>
        <dbReference type="ChEBI" id="CHEBI:15377"/>
        <dbReference type="ChEBI" id="CHEBI:15378"/>
        <dbReference type="ChEBI" id="CHEBI:27689"/>
        <dbReference type="ChEBI" id="CHEBI:57287"/>
        <dbReference type="ChEBI" id="CHEBI:61430"/>
    </reaction>
    <physiologicalReaction direction="left-to-right" evidence="5">
        <dbReference type="Rhea" id="RHEA:40060"/>
    </physiologicalReaction>
</comment>
<comment type="catalytic activity">
    <reaction evidence="2">
        <text>dodecanoyl-CoA + H2O = dodecanoate + CoA + H(+)</text>
        <dbReference type="Rhea" id="RHEA:30135"/>
        <dbReference type="ChEBI" id="CHEBI:15377"/>
        <dbReference type="ChEBI" id="CHEBI:15378"/>
        <dbReference type="ChEBI" id="CHEBI:18262"/>
        <dbReference type="ChEBI" id="CHEBI:57287"/>
        <dbReference type="ChEBI" id="CHEBI:57375"/>
    </reaction>
    <physiologicalReaction direction="left-to-right" evidence="5">
        <dbReference type="Rhea" id="RHEA:30136"/>
    </physiologicalReaction>
</comment>
<comment type="catalytic activity">
    <reaction evidence="2">
        <text>tetradecanoyl-CoA + H2O = tetradecanoate + CoA + H(+)</text>
        <dbReference type="Rhea" id="RHEA:40119"/>
        <dbReference type="ChEBI" id="CHEBI:15377"/>
        <dbReference type="ChEBI" id="CHEBI:15378"/>
        <dbReference type="ChEBI" id="CHEBI:30807"/>
        <dbReference type="ChEBI" id="CHEBI:57287"/>
        <dbReference type="ChEBI" id="CHEBI:57385"/>
    </reaction>
    <physiologicalReaction direction="left-to-right" evidence="5">
        <dbReference type="Rhea" id="RHEA:40120"/>
    </physiologicalReaction>
</comment>
<comment type="catalytic activity">
    <reaction evidence="2">
        <text>octadecanoyl-CoA + H2O = octadecanoate + CoA + H(+)</text>
        <dbReference type="Rhea" id="RHEA:30139"/>
        <dbReference type="ChEBI" id="CHEBI:15377"/>
        <dbReference type="ChEBI" id="CHEBI:15378"/>
        <dbReference type="ChEBI" id="CHEBI:25629"/>
        <dbReference type="ChEBI" id="CHEBI:57287"/>
        <dbReference type="ChEBI" id="CHEBI:57394"/>
    </reaction>
    <physiologicalReaction direction="left-to-right" evidence="5">
        <dbReference type="Rhea" id="RHEA:30140"/>
    </physiologicalReaction>
</comment>
<comment type="catalytic activity">
    <reaction evidence="2">
        <text>eicosanoyl-CoA + H2O = eicosanoate + CoA + H(+)</text>
        <dbReference type="Rhea" id="RHEA:40147"/>
        <dbReference type="ChEBI" id="CHEBI:15377"/>
        <dbReference type="ChEBI" id="CHEBI:15378"/>
        <dbReference type="ChEBI" id="CHEBI:32360"/>
        <dbReference type="ChEBI" id="CHEBI:57287"/>
        <dbReference type="ChEBI" id="CHEBI:57380"/>
    </reaction>
    <physiologicalReaction direction="left-to-right" evidence="5">
        <dbReference type="Rhea" id="RHEA:40148"/>
    </physiologicalReaction>
</comment>
<comment type="catalytic activity">
    <reaction evidence="2">
        <text>(9Z)-octadecenoyl-CoA + H2O = (9Z)-octadecenoate + CoA + H(+)</text>
        <dbReference type="Rhea" id="RHEA:40139"/>
        <dbReference type="ChEBI" id="CHEBI:15377"/>
        <dbReference type="ChEBI" id="CHEBI:15378"/>
        <dbReference type="ChEBI" id="CHEBI:30823"/>
        <dbReference type="ChEBI" id="CHEBI:57287"/>
        <dbReference type="ChEBI" id="CHEBI:57387"/>
    </reaction>
    <physiologicalReaction direction="left-to-right" evidence="5">
        <dbReference type="Rhea" id="RHEA:40140"/>
    </physiologicalReaction>
</comment>
<comment type="catalytic activity">
    <reaction evidence="2">
        <text>(9Z)-hexadecenoyl-CoA + H2O = (9Z)-hexadecenoate + CoA + H(+)</text>
        <dbReference type="Rhea" id="RHEA:40131"/>
        <dbReference type="ChEBI" id="CHEBI:15377"/>
        <dbReference type="ChEBI" id="CHEBI:15378"/>
        <dbReference type="ChEBI" id="CHEBI:32372"/>
        <dbReference type="ChEBI" id="CHEBI:57287"/>
        <dbReference type="ChEBI" id="CHEBI:61540"/>
    </reaction>
    <physiologicalReaction direction="left-to-right" evidence="5">
        <dbReference type="Rhea" id="RHEA:40132"/>
    </physiologicalReaction>
</comment>
<comment type="catalytic activity">
    <reaction evidence="2">
        <text>(9E)-octadecenoyl-CoA + H2O = (9E)-octadecenoate + CoA + H(+)</text>
        <dbReference type="Rhea" id="RHEA:40723"/>
        <dbReference type="ChEBI" id="CHEBI:15377"/>
        <dbReference type="ChEBI" id="CHEBI:15378"/>
        <dbReference type="ChEBI" id="CHEBI:30825"/>
        <dbReference type="ChEBI" id="CHEBI:57287"/>
        <dbReference type="ChEBI" id="CHEBI:77537"/>
    </reaction>
    <physiologicalReaction direction="left-to-right" evidence="5">
        <dbReference type="Rhea" id="RHEA:40724"/>
    </physiologicalReaction>
</comment>
<comment type="biophysicochemical properties">
    <kinetics>
        <KM evidence="2">35.8 uM for C10-acyl-CoA</KM>
        <KM evidence="2">3.6 uM for C12-acyl-CoA</KM>
        <KM evidence="2">2.8 uM for C14-acyl-CoA</KM>
        <KM evidence="2">3.6 uM for C16-acyl-CoA</KM>
        <KM evidence="2">2.4 uM for C18-acyl-CoA</KM>
        <KM evidence="2">2 uM for C20-acyl-CoA</KM>
        <KM evidence="2">2.4 uM for C16:1-acyl-CoA</KM>
        <KM evidence="2">4.1 uM for C18:1-acyl-CoA</KM>
        <KM evidence="2">2.1 uM for C18:1-trans-acyl-CoA</KM>
        <Vmax evidence="2">224.0 nmol/min/mg enzyme toward C10-acyl-CoA</Vmax>
        <Vmax evidence="2">700.0 nmol/min/mg enzyme toward C12-acyl-CoA</Vmax>
        <Vmax evidence="2">912.0 nmol/min/mg enzyme toward C14-acyl-CoA</Vmax>
        <Vmax evidence="2">691.0 nmol/min/mg enzyme toward C16-acyl-CoA</Vmax>
        <Vmax evidence="2">597.0 nmol/min/mg enzyme toward C18-acyl-CoA</Vmax>
        <Vmax evidence="2">520.0 nmol/min/mg enzyme toward C20-acyl-CoA</Vmax>
        <Vmax evidence="2">577.0 nmol/min/mg enzyme toward C16:1-acyl-CoA</Vmax>
        <Vmax evidence="2">258.0 nmol/min/mg enzyme toward C18:1-acyl-CoA</Vmax>
        <Vmax evidence="2">309.0 nmol/min/mg enzyme toward C18:1-trans-acyl-CoA</Vmax>
    </kinetics>
</comment>
<comment type="pathway">
    <text evidence="5">Lipid metabolism; fatty acid metabolism.</text>
</comment>
<comment type="subunit">
    <text evidence="1">Monomer.</text>
</comment>
<comment type="interaction">
    <interactant intactId="EBI-11109648">
        <id>Q86TX2</id>
    </interactant>
    <interactant intactId="EBI-347351">
        <id>P05549</id>
        <label>TFAP2A</label>
    </interactant>
    <organismsDiffer>false</organismsDiffer>
    <experiments>2</experiments>
</comment>
<comment type="subcellular location">
    <subcellularLocation>
        <location evidence="2">Cytoplasm</location>
        <location evidence="2">Cytosol</location>
    </subcellularLocation>
</comment>
<comment type="similarity">
    <text evidence="4">Belongs to the C/M/P thioester hydrolase family.</text>
</comment>
<protein>
    <recommendedName>
        <fullName evidence="5">Acyl-coenzyme A thioesterase 1</fullName>
        <shortName evidence="5">Acyl-CoA thioesterase 1</shortName>
        <ecNumber evidence="2">3.1.2.-</ecNumber>
    </recommendedName>
    <alternativeName>
        <fullName>CTE-I</fullName>
    </alternativeName>
    <alternativeName>
        <fullName>CTE-Ib</fullName>
    </alternativeName>
    <alternativeName>
        <fullName>Inducible cytosolic acyl-coenzyme A thioester hydrolase</fullName>
    </alternativeName>
    <alternativeName>
        <fullName>Long chain acyl-CoA thioester hydrolase</fullName>
        <shortName>Long chain acyl-CoA hydrolase</shortName>
    </alternativeName>
    <alternativeName>
        <fullName evidence="5">Palmitoyl-coenzyme A thioesterase</fullName>
        <ecNumber evidence="2">3.1.2.2</ecNumber>
    </alternativeName>
</protein>
<name>ACOT1_HUMAN</name>